<name>SBP_BACSU</name>
<accession>P28265</accession>
<organism>
    <name type="scientific">Bacillus subtilis (strain 168)</name>
    <dbReference type="NCBI Taxonomy" id="224308"/>
    <lineage>
        <taxon>Bacteria</taxon>
        <taxon>Bacillati</taxon>
        <taxon>Bacillota</taxon>
        <taxon>Bacilli</taxon>
        <taxon>Bacillales</taxon>
        <taxon>Bacillaceae</taxon>
        <taxon>Bacillus</taxon>
    </lineage>
</organism>
<evidence type="ECO:0000255" key="1"/>
<evidence type="ECO:0000305" key="2"/>
<feature type="chain" id="PRO_0000097606" description="Small basic protein">
    <location>
        <begin position="1"/>
        <end position="121"/>
    </location>
</feature>
<feature type="transmembrane region" description="Helical" evidence="1">
    <location>
        <begin position="2"/>
        <end position="22"/>
    </location>
</feature>
<feature type="transmembrane region" description="Helical" evidence="1">
    <location>
        <begin position="29"/>
        <end position="49"/>
    </location>
</feature>
<feature type="transmembrane region" description="Helical" evidence="1">
    <location>
        <begin position="57"/>
        <end position="77"/>
    </location>
</feature>
<dbReference type="EMBL" id="M22630">
    <property type="protein sequence ID" value="AAA22455.1"/>
    <property type="molecule type" value="Genomic_DNA"/>
</dbReference>
<dbReference type="EMBL" id="AL009126">
    <property type="protein sequence ID" value="CAB13400.1"/>
    <property type="molecule type" value="Genomic_DNA"/>
</dbReference>
<dbReference type="EMBL" id="X66239">
    <property type="protein sequence ID" value="CAA46967.1"/>
    <property type="molecule type" value="Genomic_DNA"/>
</dbReference>
<dbReference type="PIR" id="I39846">
    <property type="entry name" value="I39846"/>
</dbReference>
<dbReference type="RefSeq" id="NP_389410.1">
    <property type="nucleotide sequence ID" value="NC_000964.3"/>
</dbReference>
<dbReference type="RefSeq" id="WP_003238683.1">
    <property type="nucleotide sequence ID" value="NZ_OZ025638.1"/>
</dbReference>
<dbReference type="FunCoup" id="P28265">
    <property type="interactions" value="31"/>
</dbReference>
<dbReference type="STRING" id="224308.BSU15270"/>
<dbReference type="PaxDb" id="224308-BSU15270"/>
<dbReference type="EnsemblBacteria" id="CAB13400">
    <property type="protein sequence ID" value="CAB13400"/>
    <property type="gene ID" value="BSU_15270"/>
</dbReference>
<dbReference type="GeneID" id="936141"/>
<dbReference type="KEGG" id="bsu:BSU15270"/>
<dbReference type="PATRIC" id="fig|224308.179.peg.1665"/>
<dbReference type="eggNOG" id="COG3856">
    <property type="taxonomic scope" value="Bacteria"/>
</dbReference>
<dbReference type="InParanoid" id="P28265"/>
<dbReference type="OrthoDB" id="9812056at2"/>
<dbReference type="PhylomeDB" id="P28265"/>
<dbReference type="BioCyc" id="BSUB:BSU15270-MONOMER"/>
<dbReference type="Proteomes" id="UP000001570">
    <property type="component" value="Chromosome"/>
</dbReference>
<dbReference type="GO" id="GO:0005886">
    <property type="term" value="C:plasma membrane"/>
    <property type="evidence" value="ECO:0007669"/>
    <property type="project" value="UniProtKB-SubCell"/>
</dbReference>
<dbReference type="InterPro" id="IPR009709">
    <property type="entry name" value="DUF1290"/>
</dbReference>
<dbReference type="Pfam" id="PF06947">
    <property type="entry name" value="DUF1290"/>
    <property type="match status" value="1"/>
</dbReference>
<dbReference type="PIRSF" id="PIRSF018579">
    <property type="entry name" value="Sbp"/>
    <property type="match status" value="1"/>
</dbReference>
<reference key="1">
    <citation type="journal article" date="1988" name="J. Bacteriol.">
        <title>Cloning and characterization of Bacillus subtilis homologs of Escherichia coli cell division genes ftsZ and ftsA.</title>
        <authorList>
            <person name="Beall B."/>
            <person name="Lowe M."/>
            <person name="Lutkenhaus J."/>
        </authorList>
    </citation>
    <scope>NUCLEOTIDE SEQUENCE [GENOMIC DNA]</scope>
</reference>
<reference key="2">
    <citation type="journal article" date="1997" name="Nature">
        <title>The complete genome sequence of the Gram-positive bacterium Bacillus subtilis.</title>
        <authorList>
            <person name="Kunst F."/>
            <person name="Ogasawara N."/>
            <person name="Moszer I."/>
            <person name="Albertini A.M."/>
            <person name="Alloni G."/>
            <person name="Azevedo V."/>
            <person name="Bertero M.G."/>
            <person name="Bessieres P."/>
            <person name="Bolotin A."/>
            <person name="Borchert S."/>
            <person name="Borriss R."/>
            <person name="Boursier L."/>
            <person name="Brans A."/>
            <person name="Braun M."/>
            <person name="Brignell S.C."/>
            <person name="Bron S."/>
            <person name="Brouillet S."/>
            <person name="Bruschi C.V."/>
            <person name="Caldwell B."/>
            <person name="Capuano V."/>
            <person name="Carter N.M."/>
            <person name="Choi S.-K."/>
            <person name="Codani J.-J."/>
            <person name="Connerton I.F."/>
            <person name="Cummings N.J."/>
            <person name="Daniel R.A."/>
            <person name="Denizot F."/>
            <person name="Devine K.M."/>
            <person name="Duesterhoeft A."/>
            <person name="Ehrlich S.D."/>
            <person name="Emmerson P.T."/>
            <person name="Entian K.-D."/>
            <person name="Errington J."/>
            <person name="Fabret C."/>
            <person name="Ferrari E."/>
            <person name="Foulger D."/>
            <person name="Fritz C."/>
            <person name="Fujita M."/>
            <person name="Fujita Y."/>
            <person name="Fuma S."/>
            <person name="Galizzi A."/>
            <person name="Galleron N."/>
            <person name="Ghim S.-Y."/>
            <person name="Glaser P."/>
            <person name="Goffeau A."/>
            <person name="Golightly E.J."/>
            <person name="Grandi G."/>
            <person name="Guiseppi G."/>
            <person name="Guy B.J."/>
            <person name="Haga K."/>
            <person name="Haiech J."/>
            <person name="Harwood C.R."/>
            <person name="Henaut A."/>
            <person name="Hilbert H."/>
            <person name="Holsappel S."/>
            <person name="Hosono S."/>
            <person name="Hullo M.-F."/>
            <person name="Itaya M."/>
            <person name="Jones L.-M."/>
            <person name="Joris B."/>
            <person name="Karamata D."/>
            <person name="Kasahara Y."/>
            <person name="Klaerr-Blanchard M."/>
            <person name="Klein C."/>
            <person name="Kobayashi Y."/>
            <person name="Koetter P."/>
            <person name="Koningstein G."/>
            <person name="Krogh S."/>
            <person name="Kumano M."/>
            <person name="Kurita K."/>
            <person name="Lapidus A."/>
            <person name="Lardinois S."/>
            <person name="Lauber J."/>
            <person name="Lazarevic V."/>
            <person name="Lee S.-M."/>
            <person name="Levine A."/>
            <person name="Liu H."/>
            <person name="Masuda S."/>
            <person name="Mauel C."/>
            <person name="Medigue C."/>
            <person name="Medina N."/>
            <person name="Mellado R.P."/>
            <person name="Mizuno M."/>
            <person name="Moestl D."/>
            <person name="Nakai S."/>
            <person name="Noback M."/>
            <person name="Noone D."/>
            <person name="O'Reilly M."/>
            <person name="Ogawa K."/>
            <person name="Ogiwara A."/>
            <person name="Oudega B."/>
            <person name="Park S.-H."/>
            <person name="Parro V."/>
            <person name="Pohl T.M."/>
            <person name="Portetelle D."/>
            <person name="Porwollik S."/>
            <person name="Prescott A.M."/>
            <person name="Presecan E."/>
            <person name="Pujic P."/>
            <person name="Purnelle B."/>
            <person name="Rapoport G."/>
            <person name="Rey M."/>
            <person name="Reynolds S."/>
            <person name="Rieger M."/>
            <person name="Rivolta C."/>
            <person name="Rocha E."/>
            <person name="Roche B."/>
            <person name="Rose M."/>
            <person name="Sadaie Y."/>
            <person name="Sato T."/>
            <person name="Scanlan E."/>
            <person name="Schleich S."/>
            <person name="Schroeter R."/>
            <person name="Scoffone F."/>
            <person name="Sekiguchi J."/>
            <person name="Sekowska A."/>
            <person name="Seror S.J."/>
            <person name="Serror P."/>
            <person name="Shin B.-S."/>
            <person name="Soldo B."/>
            <person name="Sorokin A."/>
            <person name="Tacconi E."/>
            <person name="Takagi T."/>
            <person name="Takahashi H."/>
            <person name="Takemaru K."/>
            <person name="Takeuchi M."/>
            <person name="Tamakoshi A."/>
            <person name="Tanaka T."/>
            <person name="Terpstra P."/>
            <person name="Tognoni A."/>
            <person name="Tosato V."/>
            <person name="Uchiyama S."/>
            <person name="Vandenbol M."/>
            <person name="Vannier F."/>
            <person name="Vassarotti A."/>
            <person name="Viari A."/>
            <person name="Wambutt R."/>
            <person name="Wedler E."/>
            <person name="Wedler H."/>
            <person name="Weitzenegger T."/>
            <person name="Winters P."/>
            <person name="Wipat A."/>
            <person name="Yamamoto H."/>
            <person name="Yamane K."/>
            <person name="Yasumoto K."/>
            <person name="Yata K."/>
            <person name="Yoshida K."/>
            <person name="Yoshikawa H.-F."/>
            <person name="Zumstein E."/>
            <person name="Yoshikawa H."/>
            <person name="Danchin A."/>
        </authorList>
    </citation>
    <scope>NUCLEOTIDE SEQUENCE [LARGE SCALE GENOMIC DNA]</scope>
    <source>
        <strain>168</strain>
    </source>
</reference>
<reference key="3">
    <citation type="journal article" date="1992" name="J. Mol. Biol.">
        <title>Developmental regulation of transcription of the Bacillus subtilis ftsAZ operon.</title>
        <authorList>
            <person name="Gonzy-Treboul G."/>
            <person name="Karmazyn-Campelli C."/>
            <person name="Stragier P."/>
        </authorList>
    </citation>
    <scope>NUCLEOTIDE SEQUENCE [GENOMIC DNA] OF 52-121</scope>
    <source>
        <strain>168 / JH642</strain>
    </source>
</reference>
<keyword id="KW-1003">Cell membrane</keyword>
<keyword id="KW-0472">Membrane</keyword>
<keyword id="KW-1185">Reference proteome</keyword>
<keyword id="KW-0812">Transmembrane</keyword>
<keyword id="KW-1133">Transmembrane helix</keyword>
<proteinExistence type="inferred from homology"/>
<comment type="subcellular location">
    <subcellularLocation>
        <location evidence="2">Cell membrane</location>
        <topology evidence="2">Multi-pass membrane protein</topology>
    </subcellularLocation>
</comment>
<comment type="similarity">
    <text evidence="2">Belongs to the sbp family.</text>
</comment>
<protein>
    <recommendedName>
        <fullName>Small basic protein</fullName>
    </recommendedName>
</protein>
<sequence length="121" mass="13313">MWLPVLGLVLGIAIGLMTNLTIPSEYSNYLSLAVLAALDTLIGGIRAHLQGTYDEMVFVSGFFFNIILAISLAFLGVHLGVDLYLAGIFAFGVRLFQNIAVIRRNLLTKWTLSKKNKKNVI</sequence>
<gene>
    <name type="primary">sbp</name>
    <name type="ordered locus">BSU15270</name>
</gene>